<proteinExistence type="inferred from homology"/>
<dbReference type="EC" id="2.4.2.29" evidence="1"/>
<dbReference type="EMBL" id="AL590842">
    <property type="protein sequence ID" value="CAL21786.1"/>
    <property type="molecule type" value="Genomic_DNA"/>
</dbReference>
<dbReference type="EMBL" id="AE009952">
    <property type="protein sequence ID" value="AAM84572.1"/>
    <property type="molecule type" value="Genomic_DNA"/>
</dbReference>
<dbReference type="EMBL" id="AE017042">
    <property type="protein sequence ID" value="AAS61005.1"/>
    <property type="molecule type" value="Genomic_DNA"/>
</dbReference>
<dbReference type="PIR" id="AG0387">
    <property type="entry name" value="AG0387"/>
</dbReference>
<dbReference type="RefSeq" id="WP_002208672.1">
    <property type="nucleotide sequence ID" value="NZ_WUCM01000079.1"/>
</dbReference>
<dbReference type="RefSeq" id="YP_002348096.1">
    <property type="nucleotide sequence ID" value="NC_003143.1"/>
</dbReference>
<dbReference type="SMR" id="Q8ZC33"/>
<dbReference type="STRING" id="214092.YPO3191"/>
<dbReference type="PaxDb" id="214092-YPO3191"/>
<dbReference type="DNASU" id="1145938"/>
<dbReference type="EnsemblBacteria" id="AAS61005">
    <property type="protein sequence ID" value="AAS61005"/>
    <property type="gene ID" value="YP_0740"/>
</dbReference>
<dbReference type="GeneID" id="57975522"/>
<dbReference type="KEGG" id="ype:YPO3191"/>
<dbReference type="KEGG" id="ypk:y0991"/>
<dbReference type="KEGG" id="ypm:YP_0740"/>
<dbReference type="PATRIC" id="fig|214092.21.peg.3647"/>
<dbReference type="eggNOG" id="COG0343">
    <property type="taxonomic scope" value="Bacteria"/>
</dbReference>
<dbReference type="HOGENOM" id="CLU_022060_0_1_6"/>
<dbReference type="OMA" id="IDLFDCV"/>
<dbReference type="OrthoDB" id="9805417at2"/>
<dbReference type="UniPathway" id="UPA00392"/>
<dbReference type="Proteomes" id="UP000000815">
    <property type="component" value="Chromosome"/>
</dbReference>
<dbReference type="Proteomes" id="UP000001019">
    <property type="component" value="Chromosome"/>
</dbReference>
<dbReference type="Proteomes" id="UP000002490">
    <property type="component" value="Chromosome"/>
</dbReference>
<dbReference type="GO" id="GO:0005737">
    <property type="term" value="C:cytoplasm"/>
    <property type="evidence" value="ECO:0000318"/>
    <property type="project" value="GO_Central"/>
</dbReference>
<dbReference type="GO" id="GO:0005829">
    <property type="term" value="C:cytosol"/>
    <property type="evidence" value="ECO:0000318"/>
    <property type="project" value="GO_Central"/>
</dbReference>
<dbReference type="GO" id="GO:0046872">
    <property type="term" value="F:metal ion binding"/>
    <property type="evidence" value="ECO:0007669"/>
    <property type="project" value="UniProtKB-KW"/>
</dbReference>
<dbReference type="GO" id="GO:0008479">
    <property type="term" value="F:tRNA-guanosine(34) queuine transglycosylase activity"/>
    <property type="evidence" value="ECO:0007669"/>
    <property type="project" value="UniProtKB-UniRule"/>
</dbReference>
<dbReference type="GO" id="GO:0008616">
    <property type="term" value="P:queuosine biosynthetic process"/>
    <property type="evidence" value="ECO:0000318"/>
    <property type="project" value="GO_Central"/>
</dbReference>
<dbReference type="GO" id="GO:0002099">
    <property type="term" value="P:tRNA wobble guanine modification"/>
    <property type="evidence" value="ECO:0000318"/>
    <property type="project" value="GO_Central"/>
</dbReference>
<dbReference type="GO" id="GO:0101030">
    <property type="term" value="P:tRNA-guanine transglycosylation"/>
    <property type="evidence" value="ECO:0007669"/>
    <property type="project" value="InterPro"/>
</dbReference>
<dbReference type="FunFam" id="3.20.20.105:FF:000001">
    <property type="entry name" value="Queuine tRNA-ribosyltransferase"/>
    <property type="match status" value="1"/>
</dbReference>
<dbReference type="Gene3D" id="3.20.20.105">
    <property type="entry name" value="Queuine tRNA-ribosyltransferase-like"/>
    <property type="match status" value="1"/>
</dbReference>
<dbReference type="HAMAP" id="MF_00168">
    <property type="entry name" value="Q_tRNA_Tgt"/>
    <property type="match status" value="1"/>
</dbReference>
<dbReference type="InterPro" id="IPR050076">
    <property type="entry name" value="ArchSynthase1/Queuine_TRR"/>
</dbReference>
<dbReference type="InterPro" id="IPR004803">
    <property type="entry name" value="TGT"/>
</dbReference>
<dbReference type="InterPro" id="IPR036511">
    <property type="entry name" value="TGT-like_sf"/>
</dbReference>
<dbReference type="InterPro" id="IPR002616">
    <property type="entry name" value="tRNA_ribo_trans-like"/>
</dbReference>
<dbReference type="NCBIfam" id="TIGR00430">
    <property type="entry name" value="Q_tRNA_tgt"/>
    <property type="match status" value="1"/>
</dbReference>
<dbReference type="NCBIfam" id="TIGR00449">
    <property type="entry name" value="tgt_general"/>
    <property type="match status" value="1"/>
</dbReference>
<dbReference type="PANTHER" id="PTHR46499">
    <property type="entry name" value="QUEUINE TRNA-RIBOSYLTRANSFERASE"/>
    <property type="match status" value="1"/>
</dbReference>
<dbReference type="PANTHER" id="PTHR46499:SF1">
    <property type="entry name" value="QUEUINE TRNA-RIBOSYLTRANSFERASE"/>
    <property type="match status" value="1"/>
</dbReference>
<dbReference type="Pfam" id="PF01702">
    <property type="entry name" value="TGT"/>
    <property type="match status" value="1"/>
</dbReference>
<dbReference type="SUPFAM" id="SSF51713">
    <property type="entry name" value="tRNA-guanine transglycosylase"/>
    <property type="match status" value="1"/>
</dbReference>
<organism>
    <name type="scientific">Yersinia pestis</name>
    <dbReference type="NCBI Taxonomy" id="632"/>
    <lineage>
        <taxon>Bacteria</taxon>
        <taxon>Pseudomonadati</taxon>
        <taxon>Pseudomonadota</taxon>
        <taxon>Gammaproteobacteria</taxon>
        <taxon>Enterobacterales</taxon>
        <taxon>Yersiniaceae</taxon>
        <taxon>Yersinia</taxon>
    </lineage>
</organism>
<accession>Q8ZC33</accession>
<accession>Q0WC92</accession>
<evidence type="ECO:0000255" key="1">
    <source>
        <dbReference type="HAMAP-Rule" id="MF_00168"/>
    </source>
</evidence>
<name>TGT_YERPE</name>
<protein>
    <recommendedName>
        <fullName evidence="1">Queuine tRNA-ribosyltransferase</fullName>
        <ecNumber evidence="1">2.4.2.29</ecNumber>
    </recommendedName>
    <alternativeName>
        <fullName evidence="1">Guanine insertion enzyme</fullName>
    </alternativeName>
    <alternativeName>
        <fullName evidence="1">tRNA-guanine transglycosylase</fullName>
    </alternativeName>
</protein>
<comment type="function">
    <text evidence="1">Catalyzes the base-exchange of a guanine (G) residue with the queuine precursor 7-aminomethyl-7-deazaguanine (PreQ1) at position 34 (anticodon wobble position) in tRNAs with GU(N) anticodons (tRNA-Asp, -Asn, -His and -Tyr). Catalysis occurs through a double-displacement mechanism. The nucleophile active site attacks the C1' of nucleotide 34 to detach the guanine base from the RNA, forming a covalent enzyme-RNA intermediate. The proton acceptor active site deprotonates the incoming PreQ1, allowing a nucleophilic attack on the C1' of the ribose to form the product. After dissociation, two additional enzymatic reactions on the tRNA convert PreQ1 to queuine (Q), resulting in the hypermodified nucleoside queuosine (7-(((4,5-cis-dihydroxy-2-cyclopenten-1-yl)amino)methyl)-7-deazaguanosine).</text>
</comment>
<comment type="catalytic activity">
    <reaction evidence="1">
        <text>7-aminomethyl-7-carbaguanine + guanosine(34) in tRNA = 7-aminomethyl-7-carbaguanosine(34) in tRNA + guanine</text>
        <dbReference type="Rhea" id="RHEA:24104"/>
        <dbReference type="Rhea" id="RHEA-COMP:10341"/>
        <dbReference type="Rhea" id="RHEA-COMP:10342"/>
        <dbReference type="ChEBI" id="CHEBI:16235"/>
        <dbReference type="ChEBI" id="CHEBI:58703"/>
        <dbReference type="ChEBI" id="CHEBI:74269"/>
        <dbReference type="ChEBI" id="CHEBI:82833"/>
        <dbReference type="EC" id="2.4.2.29"/>
    </reaction>
</comment>
<comment type="cofactor">
    <cofactor evidence="1">
        <name>Zn(2+)</name>
        <dbReference type="ChEBI" id="CHEBI:29105"/>
    </cofactor>
    <text evidence="1">Binds 1 zinc ion per subunit.</text>
</comment>
<comment type="pathway">
    <text evidence="1">tRNA modification; tRNA-queuosine biosynthesis.</text>
</comment>
<comment type="subunit">
    <text evidence="1">Homodimer. Within each dimer, one monomer is responsible for RNA recognition and catalysis, while the other monomer binds to the replacement base PreQ1.</text>
</comment>
<comment type="similarity">
    <text evidence="1">Belongs to the queuine tRNA-ribosyltransferase family.</text>
</comment>
<reference key="1">
    <citation type="journal article" date="2001" name="Nature">
        <title>Genome sequence of Yersinia pestis, the causative agent of plague.</title>
        <authorList>
            <person name="Parkhill J."/>
            <person name="Wren B.W."/>
            <person name="Thomson N.R."/>
            <person name="Titball R.W."/>
            <person name="Holden M.T.G."/>
            <person name="Prentice M.B."/>
            <person name="Sebaihia M."/>
            <person name="James K.D."/>
            <person name="Churcher C.M."/>
            <person name="Mungall K.L."/>
            <person name="Baker S."/>
            <person name="Basham D."/>
            <person name="Bentley S.D."/>
            <person name="Brooks K."/>
            <person name="Cerdeno-Tarraga A.-M."/>
            <person name="Chillingworth T."/>
            <person name="Cronin A."/>
            <person name="Davies R.M."/>
            <person name="Davis P."/>
            <person name="Dougan G."/>
            <person name="Feltwell T."/>
            <person name="Hamlin N."/>
            <person name="Holroyd S."/>
            <person name="Jagels K."/>
            <person name="Karlyshev A.V."/>
            <person name="Leather S."/>
            <person name="Moule S."/>
            <person name="Oyston P.C.F."/>
            <person name="Quail M.A."/>
            <person name="Rutherford K.M."/>
            <person name="Simmonds M."/>
            <person name="Skelton J."/>
            <person name="Stevens K."/>
            <person name="Whitehead S."/>
            <person name="Barrell B.G."/>
        </authorList>
    </citation>
    <scope>NUCLEOTIDE SEQUENCE [LARGE SCALE GENOMIC DNA]</scope>
    <source>
        <strain>CO-92 / Biovar Orientalis</strain>
    </source>
</reference>
<reference key="2">
    <citation type="journal article" date="2002" name="J. Bacteriol.">
        <title>Genome sequence of Yersinia pestis KIM.</title>
        <authorList>
            <person name="Deng W."/>
            <person name="Burland V."/>
            <person name="Plunkett G. III"/>
            <person name="Boutin A."/>
            <person name="Mayhew G.F."/>
            <person name="Liss P."/>
            <person name="Perna N.T."/>
            <person name="Rose D.J."/>
            <person name="Mau B."/>
            <person name="Zhou S."/>
            <person name="Schwartz D.C."/>
            <person name="Fetherston J.D."/>
            <person name="Lindler L.E."/>
            <person name="Brubaker R.R."/>
            <person name="Plano G.V."/>
            <person name="Straley S.C."/>
            <person name="McDonough K.A."/>
            <person name="Nilles M.L."/>
            <person name="Matson J.S."/>
            <person name="Blattner F.R."/>
            <person name="Perry R.D."/>
        </authorList>
    </citation>
    <scope>NUCLEOTIDE SEQUENCE [LARGE SCALE GENOMIC DNA]</scope>
    <source>
        <strain>KIM10+ / Biovar Mediaevalis</strain>
    </source>
</reference>
<reference key="3">
    <citation type="journal article" date="2004" name="DNA Res.">
        <title>Complete genome sequence of Yersinia pestis strain 91001, an isolate avirulent to humans.</title>
        <authorList>
            <person name="Song Y."/>
            <person name="Tong Z."/>
            <person name="Wang J."/>
            <person name="Wang L."/>
            <person name="Guo Z."/>
            <person name="Han Y."/>
            <person name="Zhang J."/>
            <person name="Pei D."/>
            <person name="Zhou D."/>
            <person name="Qin H."/>
            <person name="Pang X."/>
            <person name="Han Y."/>
            <person name="Zhai J."/>
            <person name="Li M."/>
            <person name="Cui B."/>
            <person name="Qi Z."/>
            <person name="Jin L."/>
            <person name="Dai R."/>
            <person name="Chen F."/>
            <person name="Li S."/>
            <person name="Ye C."/>
            <person name="Du Z."/>
            <person name="Lin W."/>
            <person name="Wang J."/>
            <person name="Yu J."/>
            <person name="Yang H."/>
            <person name="Wang J."/>
            <person name="Huang P."/>
            <person name="Yang R."/>
        </authorList>
    </citation>
    <scope>NUCLEOTIDE SEQUENCE [LARGE SCALE GENOMIC DNA]</scope>
    <source>
        <strain>91001 / Biovar Mediaevalis</strain>
    </source>
</reference>
<sequence>MKYELQKTDGRARRGRLVFERGVVETPAFMPVGTYGTVKGMTPEEVKETGAQILLGNTFHLWLRPGQEIMKLHGDLHDFMQWHGPILTDSGGFQVFSLGAMRKIKEEGVHFKNPINGDSVFLSPEKSMEIQYDLGSDIVMIFDECTPYPADWDYAKRSMEMSLRWAARSRQRFDELNNKNALFGIIQGGVYEDLRDVSVKGLVDIGFDGYAVGGLAVGEPKEDMHRILEHVCPQIPEDKPRYLMGVGKPEDLVEGVRRGIDMFDCVMPTRNARNGHLFVTDGVVKIRNAKHKDDTATLDEHCDCYTCRHYSRAYLHHLDRCNEILGARLNTIHNLRYYQRLMAGLRQAIEEGKLEHFVEDFYGRIGKPVPPLNV</sequence>
<gene>
    <name evidence="1" type="primary">tgt</name>
    <name type="ordered locus">YPO3191</name>
    <name type="ordered locus">y0991</name>
    <name type="ordered locus">YP_0740</name>
</gene>
<keyword id="KW-0328">Glycosyltransferase</keyword>
<keyword id="KW-0479">Metal-binding</keyword>
<keyword id="KW-0671">Queuosine biosynthesis</keyword>
<keyword id="KW-1185">Reference proteome</keyword>
<keyword id="KW-0808">Transferase</keyword>
<keyword id="KW-0819">tRNA processing</keyword>
<keyword id="KW-0862">Zinc</keyword>
<feature type="chain" id="PRO_0000135561" description="Queuine tRNA-ribosyltransferase">
    <location>
        <begin position="1"/>
        <end position="374"/>
    </location>
</feature>
<feature type="region of interest" description="RNA binding" evidence="1">
    <location>
        <begin position="245"/>
        <end position="251"/>
    </location>
</feature>
<feature type="region of interest" description="RNA binding; important for wobble base 34 recognition" evidence="1">
    <location>
        <begin position="269"/>
        <end position="273"/>
    </location>
</feature>
<feature type="active site" description="Proton acceptor" evidence="1">
    <location>
        <position position="89"/>
    </location>
</feature>
<feature type="active site" description="Nucleophile" evidence="1">
    <location>
        <position position="264"/>
    </location>
</feature>
<feature type="binding site" evidence="1">
    <location>
        <begin position="89"/>
        <end position="93"/>
    </location>
    <ligand>
        <name>substrate</name>
    </ligand>
</feature>
<feature type="binding site" evidence="1">
    <location>
        <position position="143"/>
    </location>
    <ligand>
        <name>substrate</name>
    </ligand>
</feature>
<feature type="binding site" evidence="1">
    <location>
        <position position="187"/>
    </location>
    <ligand>
        <name>substrate</name>
    </ligand>
</feature>
<feature type="binding site" evidence="1">
    <location>
        <position position="214"/>
    </location>
    <ligand>
        <name>substrate</name>
    </ligand>
</feature>
<feature type="binding site" evidence="1">
    <location>
        <position position="302"/>
    </location>
    <ligand>
        <name>Zn(2+)</name>
        <dbReference type="ChEBI" id="CHEBI:29105"/>
    </ligand>
</feature>
<feature type="binding site" evidence="1">
    <location>
        <position position="304"/>
    </location>
    <ligand>
        <name>Zn(2+)</name>
        <dbReference type="ChEBI" id="CHEBI:29105"/>
    </ligand>
</feature>
<feature type="binding site" evidence="1">
    <location>
        <position position="307"/>
    </location>
    <ligand>
        <name>Zn(2+)</name>
        <dbReference type="ChEBI" id="CHEBI:29105"/>
    </ligand>
</feature>
<feature type="binding site" evidence="1">
    <location>
        <position position="333"/>
    </location>
    <ligand>
        <name>Zn(2+)</name>
        <dbReference type="ChEBI" id="CHEBI:29105"/>
    </ligand>
</feature>